<dbReference type="EC" id="5.4.2.11" evidence="1"/>
<dbReference type="EMBL" id="BA000045">
    <property type="protein sequence ID" value="BAC89537.1"/>
    <property type="molecule type" value="Genomic_DNA"/>
</dbReference>
<dbReference type="RefSeq" id="NP_924542.1">
    <property type="nucleotide sequence ID" value="NC_005125.1"/>
</dbReference>
<dbReference type="RefSeq" id="WP_011141595.1">
    <property type="nucleotide sequence ID" value="NC_005125.1"/>
</dbReference>
<dbReference type="SMR" id="Q7NK82"/>
<dbReference type="FunCoup" id="Q7NK82">
    <property type="interactions" value="257"/>
</dbReference>
<dbReference type="STRING" id="251221.gene:10759086"/>
<dbReference type="EnsemblBacteria" id="BAC89537">
    <property type="protein sequence ID" value="BAC89537"/>
    <property type="gene ID" value="BAC89537"/>
</dbReference>
<dbReference type="KEGG" id="gvi:gll1596"/>
<dbReference type="PATRIC" id="fig|251221.4.peg.1633"/>
<dbReference type="eggNOG" id="COG0588">
    <property type="taxonomic scope" value="Bacteria"/>
</dbReference>
<dbReference type="HOGENOM" id="CLU_033323_1_4_3"/>
<dbReference type="InParanoid" id="Q7NK82"/>
<dbReference type="OrthoDB" id="9781415at2"/>
<dbReference type="PhylomeDB" id="Q7NK82"/>
<dbReference type="UniPathway" id="UPA00109">
    <property type="reaction ID" value="UER00186"/>
</dbReference>
<dbReference type="Proteomes" id="UP000000557">
    <property type="component" value="Chromosome"/>
</dbReference>
<dbReference type="GO" id="GO:0004619">
    <property type="term" value="F:phosphoglycerate mutase activity"/>
    <property type="evidence" value="ECO:0007669"/>
    <property type="project" value="UniProtKB-EC"/>
</dbReference>
<dbReference type="GO" id="GO:0006094">
    <property type="term" value="P:gluconeogenesis"/>
    <property type="evidence" value="ECO:0007669"/>
    <property type="project" value="UniProtKB-UniRule"/>
</dbReference>
<dbReference type="GO" id="GO:0006096">
    <property type="term" value="P:glycolytic process"/>
    <property type="evidence" value="ECO:0007669"/>
    <property type="project" value="UniProtKB-UniRule"/>
</dbReference>
<dbReference type="CDD" id="cd07067">
    <property type="entry name" value="HP_PGM_like"/>
    <property type="match status" value="1"/>
</dbReference>
<dbReference type="Gene3D" id="3.40.50.1240">
    <property type="entry name" value="Phosphoglycerate mutase-like"/>
    <property type="match status" value="1"/>
</dbReference>
<dbReference type="HAMAP" id="MF_01039">
    <property type="entry name" value="PGAM_GpmA"/>
    <property type="match status" value="1"/>
</dbReference>
<dbReference type="InterPro" id="IPR013078">
    <property type="entry name" value="His_Pase_superF_clade-1"/>
</dbReference>
<dbReference type="InterPro" id="IPR029033">
    <property type="entry name" value="His_PPase_superfam"/>
</dbReference>
<dbReference type="InterPro" id="IPR001345">
    <property type="entry name" value="PG/BPGM_mutase_AS"/>
</dbReference>
<dbReference type="InterPro" id="IPR005952">
    <property type="entry name" value="Phosphogly_mut1"/>
</dbReference>
<dbReference type="NCBIfam" id="TIGR01258">
    <property type="entry name" value="pgm_1"/>
    <property type="match status" value="1"/>
</dbReference>
<dbReference type="NCBIfam" id="NF002217">
    <property type="entry name" value="PRK01112.1"/>
    <property type="match status" value="1"/>
</dbReference>
<dbReference type="PANTHER" id="PTHR11931">
    <property type="entry name" value="PHOSPHOGLYCERATE MUTASE"/>
    <property type="match status" value="1"/>
</dbReference>
<dbReference type="Pfam" id="PF00300">
    <property type="entry name" value="His_Phos_1"/>
    <property type="match status" value="2"/>
</dbReference>
<dbReference type="PIRSF" id="PIRSF000709">
    <property type="entry name" value="6PFK_2-Ptase"/>
    <property type="match status" value="1"/>
</dbReference>
<dbReference type="SMART" id="SM00855">
    <property type="entry name" value="PGAM"/>
    <property type="match status" value="1"/>
</dbReference>
<dbReference type="SUPFAM" id="SSF53254">
    <property type="entry name" value="Phosphoglycerate mutase-like"/>
    <property type="match status" value="1"/>
</dbReference>
<dbReference type="PROSITE" id="PS00175">
    <property type="entry name" value="PG_MUTASE"/>
    <property type="match status" value="1"/>
</dbReference>
<reference key="1">
    <citation type="journal article" date="2003" name="DNA Res.">
        <title>Complete genome structure of Gloeobacter violaceus PCC 7421, a cyanobacterium that lacks thylakoids.</title>
        <authorList>
            <person name="Nakamura Y."/>
            <person name="Kaneko T."/>
            <person name="Sato S."/>
            <person name="Mimuro M."/>
            <person name="Miyashita H."/>
            <person name="Tsuchiya T."/>
            <person name="Sasamoto S."/>
            <person name="Watanabe A."/>
            <person name="Kawashima K."/>
            <person name="Kishida Y."/>
            <person name="Kiyokawa C."/>
            <person name="Kohara M."/>
            <person name="Matsumoto M."/>
            <person name="Matsuno A."/>
            <person name="Nakazaki N."/>
            <person name="Shimpo S."/>
            <person name="Takeuchi C."/>
            <person name="Yamada M."/>
            <person name="Tabata S."/>
        </authorList>
    </citation>
    <scope>NUCLEOTIDE SEQUENCE [LARGE SCALE GENOMIC DNA]</scope>
    <source>
        <strain>ATCC 29082 / PCC 7421</strain>
    </source>
</reference>
<proteinExistence type="inferred from homology"/>
<evidence type="ECO:0000255" key="1">
    <source>
        <dbReference type="HAMAP-Rule" id="MF_01039"/>
    </source>
</evidence>
<gene>
    <name evidence="1" type="primary">gpmA1</name>
    <name type="ordered locus">gll1596</name>
</gene>
<keyword id="KW-0312">Gluconeogenesis</keyword>
<keyword id="KW-0324">Glycolysis</keyword>
<keyword id="KW-0413">Isomerase</keyword>
<keyword id="KW-1185">Reference proteome</keyword>
<protein>
    <recommendedName>
        <fullName evidence="1">2,3-bisphosphoglycerate-dependent phosphoglycerate mutase 1</fullName>
        <shortName evidence="1">BPG-dependent PGAM 1</shortName>
        <shortName evidence="1">PGAM 1</shortName>
        <shortName evidence="1">Phosphoglyceromutase 1</shortName>
        <shortName evidence="1">dPGM 1</shortName>
        <ecNumber evidence="1">5.4.2.11</ecNumber>
    </recommendedName>
</protein>
<organism>
    <name type="scientific">Gloeobacter violaceus (strain ATCC 29082 / PCC 7421)</name>
    <dbReference type="NCBI Taxonomy" id="251221"/>
    <lineage>
        <taxon>Bacteria</taxon>
        <taxon>Bacillati</taxon>
        <taxon>Cyanobacteriota</taxon>
        <taxon>Cyanophyceae</taxon>
        <taxon>Gloeobacterales</taxon>
        <taxon>Gloeobacteraceae</taxon>
        <taxon>Gloeobacter</taxon>
    </lineage>
</organism>
<sequence length="232" mass="26061">MAHLILIRHGQSLWNAANKFTGWVDVPLSERGRAEATIASCKLRDYRVNVCFTSMLMRAIETAVITLTECDDICGGKIPIIKHEADDENWHGWDNYDGDPAAELPIYPTATLDERYYGDLQGLDKAETTAKYGKEQVQIWRRSYSVRPPGGESLEDTRKRVYPYFTNRILGHIKQGDNVLVAAHGNSLRSIIMILETLSEEEVPKVELATGVPIVYELDKAAHMLSKAVLTN</sequence>
<name>GPMA1_GLOVI</name>
<feature type="chain" id="PRO_0000179879" description="2,3-bisphosphoglycerate-dependent phosphoglycerate mutase 1">
    <location>
        <begin position="1"/>
        <end position="232"/>
    </location>
</feature>
<feature type="active site" description="Tele-phosphohistidine intermediate" evidence="1">
    <location>
        <position position="9"/>
    </location>
</feature>
<feature type="active site" description="Proton donor/acceptor" evidence="1">
    <location>
        <position position="114"/>
    </location>
</feature>
<feature type="binding site" evidence="1">
    <location>
        <begin position="8"/>
        <end position="15"/>
    </location>
    <ligand>
        <name>substrate</name>
    </ligand>
</feature>
<feature type="binding site" evidence="1">
    <location>
        <begin position="21"/>
        <end position="22"/>
    </location>
    <ligand>
        <name>substrate</name>
    </ligand>
</feature>
<feature type="binding site" evidence="1">
    <location>
        <position position="58"/>
    </location>
    <ligand>
        <name>substrate</name>
    </ligand>
</feature>
<feature type="binding site" evidence="1">
    <location>
        <begin position="114"/>
        <end position="117"/>
    </location>
    <ligand>
        <name>substrate</name>
    </ligand>
</feature>
<feature type="binding site" evidence="1">
    <location>
        <position position="125"/>
    </location>
    <ligand>
        <name>substrate</name>
    </ligand>
</feature>
<feature type="binding site" evidence="1">
    <location>
        <begin position="141"/>
        <end position="142"/>
    </location>
    <ligand>
        <name>substrate</name>
    </ligand>
</feature>
<feature type="binding site" evidence="1">
    <location>
        <begin position="185"/>
        <end position="186"/>
    </location>
    <ligand>
        <name>substrate</name>
    </ligand>
</feature>
<feature type="site" description="Transition state stabilizer" evidence="1">
    <location>
        <position position="184"/>
    </location>
</feature>
<comment type="function">
    <text evidence="1">Catalyzes the interconversion of 2-phosphoglycerate and 3-phosphoglycerate.</text>
</comment>
<comment type="catalytic activity">
    <reaction evidence="1">
        <text>(2R)-2-phosphoglycerate = (2R)-3-phosphoglycerate</text>
        <dbReference type="Rhea" id="RHEA:15901"/>
        <dbReference type="ChEBI" id="CHEBI:58272"/>
        <dbReference type="ChEBI" id="CHEBI:58289"/>
        <dbReference type="EC" id="5.4.2.11"/>
    </reaction>
</comment>
<comment type="pathway">
    <text evidence="1">Carbohydrate degradation; glycolysis; pyruvate from D-glyceraldehyde 3-phosphate: step 3/5.</text>
</comment>
<comment type="similarity">
    <text evidence="1">Belongs to the phosphoglycerate mutase family. BPG-dependent PGAM subfamily.</text>
</comment>
<accession>Q7NK82</accession>